<feature type="chain" id="PRO_0000225323" description="DNA-directed RNA polymerase subunit beta'">
    <location>
        <begin position="1"/>
        <end position="681"/>
    </location>
</feature>
<feature type="binding site" evidence="1">
    <location>
        <position position="69"/>
    </location>
    <ligand>
        <name>Zn(2+)</name>
        <dbReference type="ChEBI" id="CHEBI:29105"/>
    </ligand>
</feature>
<feature type="binding site" evidence="1">
    <location>
        <position position="71"/>
    </location>
    <ligand>
        <name>Zn(2+)</name>
        <dbReference type="ChEBI" id="CHEBI:29105"/>
    </ligand>
</feature>
<feature type="binding site" evidence="1">
    <location>
        <position position="87"/>
    </location>
    <ligand>
        <name>Zn(2+)</name>
        <dbReference type="ChEBI" id="CHEBI:29105"/>
    </ligand>
</feature>
<feature type="binding site" evidence="1">
    <location>
        <position position="90"/>
    </location>
    <ligand>
        <name>Zn(2+)</name>
        <dbReference type="ChEBI" id="CHEBI:29105"/>
    </ligand>
</feature>
<feature type="binding site" evidence="1">
    <location>
        <position position="489"/>
    </location>
    <ligand>
        <name>Mg(2+)</name>
        <dbReference type="ChEBI" id="CHEBI:18420"/>
    </ligand>
</feature>
<feature type="binding site" evidence="1">
    <location>
        <position position="491"/>
    </location>
    <ligand>
        <name>Mg(2+)</name>
        <dbReference type="ChEBI" id="CHEBI:18420"/>
    </ligand>
</feature>
<feature type="binding site" evidence="1">
    <location>
        <position position="493"/>
    </location>
    <ligand>
        <name>Mg(2+)</name>
        <dbReference type="ChEBI" id="CHEBI:18420"/>
    </ligand>
</feature>
<accession>Q33C47</accession>
<comment type="function">
    <text evidence="1">DNA-dependent RNA polymerase catalyzes the transcription of DNA into RNA using the four ribonucleoside triphosphates as substrates.</text>
</comment>
<comment type="catalytic activity">
    <reaction evidence="1">
        <text>RNA(n) + a ribonucleoside 5'-triphosphate = RNA(n+1) + diphosphate</text>
        <dbReference type="Rhea" id="RHEA:21248"/>
        <dbReference type="Rhea" id="RHEA-COMP:14527"/>
        <dbReference type="Rhea" id="RHEA-COMP:17342"/>
        <dbReference type="ChEBI" id="CHEBI:33019"/>
        <dbReference type="ChEBI" id="CHEBI:61557"/>
        <dbReference type="ChEBI" id="CHEBI:140395"/>
        <dbReference type="EC" id="2.7.7.6"/>
    </reaction>
</comment>
<comment type="cofactor">
    <cofactor evidence="1">
        <name>Mg(2+)</name>
        <dbReference type="ChEBI" id="CHEBI:18420"/>
    </cofactor>
    <text evidence="1">Binds 1 Mg(2+) ion per subunit.</text>
</comment>
<comment type="cofactor">
    <cofactor evidence="1">
        <name>Zn(2+)</name>
        <dbReference type="ChEBI" id="CHEBI:29105"/>
    </cofactor>
    <text evidence="1">Binds 1 Zn(2+) ion per subunit.</text>
</comment>
<comment type="subunit">
    <text evidence="1">In plastids the minimal PEP RNA polymerase catalytic core is composed of four subunits: alpha, beta, beta', and beta''. When a (nuclear-encoded) sigma factor is associated with the core the holoenzyme is formed, which can initiate transcription.</text>
</comment>
<comment type="subcellular location">
    <subcellularLocation>
        <location evidence="1">Plastid</location>
        <location evidence="1">Chloroplast</location>
    </subcellularLocation>
</comment>
<comment type="similarity">
    <text evidence="1">Belongs to the RNA polymerase beta' chain family. RpoC1 subfamily.</text>
</comment>
<comment type="sequence caution" evidence="2">
    <conflict type="erroneous initiation">
        <sequence resource="EMBL-CDS" id="BAE47988"/>
    </conflict>
    <text>Extended N-terminus.</text>
</comment>
<organism>
    <name type="scientific">Nicotiana tomentosiformis</name>
    <name type="common">Tobacco</name>
    <dbReference type="NCBI Taxonomy" id="4098"/>
    <lineage>
        <taxon>Eukaryota</taxon>
        <taxon>Viridiplantae</taxon>
        <taxon>Streptophyta</taxon>
        <taxon>Embryophyta</taxon>
        <taxon>Tracheophyta</taxon>
        <taxon>Spermatophyta</taxon>
        <taxon>Magnoliopsida</taxon>
        <taxon>eudicotyledons</taxon>
        <taxon>Gunneridae</taxon>
        <taxon>Pentapetalae</taxon>
        <taxon>asterids</taxon>
        <taxon>lamiids</taxon>
        <taxon>Solanales</taxon>
        <taxon>Solanaceae</taxon>
        <taxon>Nicotianoideae</taxon>
        <taxon>Nicotianeae</taxon>
        <taxon>Nicotiana</taxon>
    </lineage>
</organism>
<sequence>MIDRYKHQQLRIGSVSPQQISAWATKILPNGEIVGEVTKPYTFHYKTNKPEKDGLFCERIFGPIKSGICACGNYRVIGDEKEDPKFCEQCGVEFVDSRIRRYQMGYIKLACPVTHVWYLKRLPSYIANLLDKPLKELEGLVYCDFSFARPITKKPTFLRLRGLFEYEIQSWKYSIPLFFTTQGFDTFRNREISTGAGAIREQLADLDLRIIIENSLVEWEELGEEGHTGNEWEDRKVGRRKDFLVRRVELAKHFIRTNIEPEWMVLCLLPVLPPELRPIIQIDGGKLMSSDINELYRRVIYRNNTLTDLLTTSRSTPVELVMCQEKLVQEAVDTLLDNGIRGQPMRDGHNKVYKSFSDVIEGKEGRFRETLLGKRVDYSGRSVIVVGPSLSLHRCGLPREIAIELFQTFVIRGLIRQHLASNIGVAKSQIREKEPIVWEILQEVMQGHPVLLNRAPTLHRLGIQAFQPVLVAGRAICLHPLVCKGFNADFDGDQMAVHVPLSLEAQVEARLLMFSHMNLLSPAIGDPISVPTQDMLIGLYVLTSGNPRGICVNRYNPCNRINYQNKKRSDNSHYKYTKEPFFSNSYDAIGAYRQKRINLDSPLWLRWRLDQRVIASRETPIEVHYESLGTFYEIYGHYLIVRSLKKQILFIYIRTTVGHIALYREIEEAIQGFSRAYSYGT</sequence>
<reference key="1">
    <citation type="journal article" date="2006" name="Mol. Genet. Genomics">
        <title>The chloroplast genome of Nicotiana sylvestris and Nicotiana tomentosiformis: complete sequencing confirms that the Nicotiana sylvestris progenitor is the maternal genome donor of Nicotiana tabacum.</title>
        <authorList>
            <person name="Yukawa M."/>
            <person name="Tsudzuki T."/>
            <person name="Sugiura M."/>
        </authorList>
    </citation>
    <scope>NUCLEOTIDE SEQUENCE [LARGE SCALE GENOMIC DNA]</scope>
</reference>
<gene>
    <name evidence="1" type="primary">rpoC1</name>
</gene>
<geneLocation type="chloroplast"/>
<name>RPOC1_NICTO</name>
<evidence type="ECO:0000255" key="1">
    <source>
        <dbReference type="HAMAP-Rule" id="MF_01323"/>
    </source>
</evidence>
<evidence type="ECO:0000305" key="2"/>
<protein>
    <recommendedName>
        <fullName evidence="1">DNA-directed RNA polymerase subunit beta'</fullName>
        <ecNumber evidence="1">2.7.7.6</ecNumber>
    </recommendedName>
    <alternativeName>
        <fullName evidence="1">PEP</fullName>
    </alternativeName>
    <alternativeName>
        <fullName evidence="1">Plastid-encoded RNA polymerase subunit beta'</fullName>
        <shortName evidence="1">RNA polymerase subunit beta'</shortName>
    </alternativeName>
</protein>
<dbReference type="EC" id="2.7.7.6" evidence="1"/>
<dbReference type="EMBL" id="AB240139">
    <property type="protein sequence ID" value="BAE47988.1"/>
    <property type="status" value="ALT_INIT"/>
    <property type="molecule type" value="Genomic_DNA"/>
</dbReference>
<dbReference type="RefSeq" id="YP_398850.2">
    <property type="nucleotide sequence ID" value="NC_007602.1"/>
</dbReference>
<dbReference type="SMR" id="Q33C47"/>
<dbReference type="GeneID" id="3776379"/>
<dbReference type="KEGG" id="nto:3776379"/>
<dbReference type="OrthoDB" id="1862828at2759"/>
<dbReference type="GO" id="GO:0009507">
    <property type="term" value="C:chloroplast"/>
    <property type="evidence" value="ECO:0007669"/>
    <property type="project" value="UniProtKB-SubCell"/>
</dbReference>
<dbReference type="GO" id="GO:0000428">
    <property type="term" value="C:DNA-directed RNA polymerase complex"/>
    <property type="evidence" value="ECO:0007669"/>
    <property type="project" value="UniProtKB-KW"/>
</dbReference>
<dbReference type="GO" id="GO:0005739">
    <property type="term" value="C:mitochondrion"/>
    <property type="evidence" value="ECO:0007669"/>
    <property type="project" value="GOC"/>
</dbReference>
<dbReference type="GO" id="GO:0003677">
    <property type="term" value="F:DNA binding"/>
    <property type="evidence" value="ECO:0007669"/>
    <property type="project" value="UniProtKB-UniRule"/>
</dbReference>
<dbReference type="GO" id="GO:0003899">
    <property type="term" value="F:DNA-directed RNA polymerase activity"/>
    <property type="evidence" value="ECO:0007669"/>
    <property type="project" value="UniProtKB-UniRule"/>
</dbReference>
<dbReference type="GO" id="GO:0000287">
    <property type="term" value="F:magnesium ion binding"/>
    <property type="evidence" value="ECO:0007669"/>
    <property type="project" value="UniProtKB-UniRule"/>
</dbReference>
<dbReference type="GO" id="GO:0008270">
    <property type="term" value="F:zinc ion binding"/>
    <property type="evidence" value="ECO:0007669"/>
    <property type="project" value="UniProtKB-UniRule"/>
</dbReference>
<dbReference type="GO" id="GO:0006351">
    <property type="term" value="P:DNA-templated transcription"/>
    <property type="evidence" value="ECO:0007669"/>
    <property type="project" value="UniProtKB-UniRule"/>
</dbReference>
<dbReference type="FunFam" id="1.10.40.90:FF:000002">
    <property type="entry name" value="DNA-directed RNA polymerase subunit"/>
    <property type="match status" value="1"/>
</dbReference>
<dbReference type="FunFam" id="4.10.860.120:FF:000007">
    <property type="entry name" value="DNA-directed RNA polymerase subunit gamma"/>
    <property type="match status" value="1"/>
</dbReference>
<dbReference type="Gene3D" id="1.10.40.90">
    <property type="match status" value="1"/>
</dbReference>
<dbReference type="Gene3D" id="2.40.40.20">
    <property type="match status" value="1"/>
</dbReference>
<dbReference type="Gene3D" id="4.10.860.120">
    <property type="entry name" value="RNA polymerase II, clamp domain"/>
    <property type="match status" value="1"/>
</dbReference>
<dbReference type="Gene3D" id="1.10.274.100">
    <property type="entry name" value="RNA polymerase Rpb1, domain 3"/>
    <property type="match status" value="1"/>
</dbReference>
<dbReference type="HAMAP" id="MF_01323">
    <property type="entry name" value="RNApol_bact_RpoC1"/>
    <property type="match status" value="1"/>
</dbReference>
<dbReference type="InterPro" id="IPR045867">
    <property type="entry name" value="DNA-dir_RpoC_beta_prime"/>
</dbReference>
<dbReference type="InterPro" id="IPR000722">
    <property type="entry name" value="RNA_pol_asu"/>
</dbReference>
<dbReference type="InterPro" id="IPR006592">
    <property type="entry name" value="RNA_pol_N"/>
</dbReference>
<dbReference type="InterPro" id="IPR007080">
    <property type="entry name" value="RNA_pol_Rpb1_1"/>
</dbReference>
<dbReference type="InterPro" id="IPR042102">
    <property type="entry name" value="RNA_pol_Rpb1_3_sf"/>
</dbReference>
<dbReference type="InterPro" id="IPR044893">
    <property type="entry name" value="RNA_pol_Rpb1_clamp_domain"/>
</dbReference>
<dbReference type="InterPro" id="IPR034678">
    <property type="entry name" value="RNApol_RpoC1"/>
</dbReference>
<dbReference type="PANTHER" id="PTHR19376">
    <property type="entry name" value="DNA-DIRECTED RNA POLYMERASE"/>
    <property type="match status" value="1"/>
</dbReference>
<dbReference type="PANTHER" id="PTHR19376:SF54">
    <property type="entry name" value="DNA-DIRECTED RNA POLYMERASE SUBUNIT BETA"/>
    <property type="match status" value="1"/>
</dbReference>
<dbReference type="Pfam" id="PF04997">
    <property type="entry name" value="RNA_pol_Rpb1_1"/>
    <property type="match status" value="1"/>
</dbReference>
<dbReference type="Pfam" id="PF00623">
    <property type="entry name" value="RNA_pol_Rpb1_2"/>
    <property type="match status" value="2"/>
</dbReference>
<dbReference type="SMART" id="SM00663">
    <property type="entry name" value="RPOLA_N"/>
    <property type="match status" value="1"/>
</dbReference>
<dbReference type="SUPFAM" id="SSF64484">
    <property type="entry name" value="beta and beta-prime subunits of DNA dependent RNA-polymerase"/>
    <property type="match status" value="1"/>
</dbReference>
<keyword id="KW-0150">Chloroplast</keyword>
<keyword id="KW-0240">DNA-directed RNA polymerase</keyword>
<keyword id="KW-0460">Magnesium</keyword>
<keyword id="KW-0479">Metal-binding</keyword>
<keyword id="KW-0548">Nucleotidyltransferase</keyword>
<keyword id="KW-0934">Plastid</keyword>
<keyword id="KW-0804">Transcription</keyword>
<keyword id="KW-0808">Transferase</keyword>
<keyword id="KW-0862">Zinc</keyword>
<proteinExistence type="inferred from homology"/>